<keyword id="KW-0520">NAD</keyword>
<keyword id="KW-0560">Oxidoreductase</keyword>
<keyword id="KW-0816">Tricarboxylic acid cycle</keyword>
<proteinExistence type="inferred from homology"/>
<feature type="chain" id="PRO_1000215357" description="Malate dehydrogenase">
    <location>
        <begin position="1"/>
        <end position="328"/>
    </location>
</feature>
<feature type="active site" description="Proton acceptor" evidence="1">
    <location>
        <position position="190"/>
    </location>
</feature>
<feature type="binding site" evidence="1">
    <location>
        <begin position="12"/>
        <end position="18"/>
    </location>
    <ligand>
        <name>NAD(+)</name>
        <dbReference type="ChEBI" id="CHEBI:57540"/>
    </ligand>
</feature>
<feature type="binding site" evidence="1">
    <location>
        <position position="95"/>
    </location>
    <ligand>
        <name>substrate</name>
    </ligand>
</feature>
<feature type="binding site" evidence="1">
    <location>
        <position position="101"/>
    </location>
    <ligand>
        <name>substrate</name>
    </ligand>
</feature>
<feature type="binding site" evidence="1">
    <location>
        <position position="108"/>
    </location>
    <ligand>
        <name>NAD(+)</name>
        <dbReference type="ChEBI" id="CHEBI:57540"/>
    </ligand>
</feature>
<feature type="binding site" evidence="1">
    <location>
        <position position="115"/>
    </location>
    <ligand>
        <name>NAD(+)</name>
        <dbReference type="ChEBI" id="CHEBI:57540"/>
    </ligand>
</feature>
<feature type="binding site" evidence="1">
    <location>
        <begin position="132"/>
        <end position="134"/>
    </location>
    <ligand>
        <name>NAD(+)</name>
        <dbReference type="ChEBI" id="CHEBI:57540"/>
    </ligand>
</feature>
<feature type="binding site" evidence="1">
    <location>
        <position position="134"/>
    </location>
    <ligand>
        <name>substrate</name>
    </ligand>
</feature>
<feature type="binding site" evidence="1">
    <location>
        <position position="165"/>
    </location>
    <ligand>
        <name>substrate</name>
    </ligand>
</feature>
<name>MDH_VARPS</name>
<accession>C5CSI5</accession>
<dbReference type="EC" id="1.1.1.37" evidence="1"/>
<dbReference type="EMBL" id="CP001635">
    <property type="protein sequence ID" value="ACS18083.1"/>
    <property type="molecule type" value="Genomic_DNA"/>
</dbReference>
<dbReference type="SMR" id="C5CSI5"/>
<dbReference type="STRING" id="543728.Vapar_1432"/>
<dbReference type="KEGG" id="vap:Vapar_1432"/>
<dbReference type="eggNOG" id="COG0039">
    <property type="taxonomic scope" value="Bacteria"/>
</dbReference>
<dbReference type="HOGENOM" id="CLU_040727_2_0_4"/>
<dbReference type="OrthoDB" id="9802969at2"/>
<dbReference type="GO" id="GO:0030060">
    <property type="term" value="F:L-malate dehydrogenase (NAD+) activity"/>
    <property type="evidence" value="ECO:0007669"/>
    <property type="project" value="UniProtKB-UniRule"/>
</dbReference>
<dbReference type="GO" id="GO:0006108">
    <property type="term" value="P:malate metabolic process"/>
    <property type="evidence" value="ECO:0007669"/>
    <property type="project" value="InterPro"/>
</dbReference>
<dbReference type="GO" id="GO:0006099">
    <property type="term" value="P:tricarboxylic acid cycle"/>
    <property type="evidence" value="ECO:0007669"/>
    <property type="project" value="UniProtKB-UniRule"/>
</dbReference>
<dbReference type="CDD" id="cd01338">
    <property type="entry name" value="MDH_chloroplast-like"/>
    <property type="match status" value="1"/>
</dbReference>
<dbReference type="FunFam" id="3.40.50.720:FF:000010">
    <property type="entry name" value="Malate dehydrogenase"/>
    <property type="match status" value="1"/>
</dbReference>
<dbReference type="FunFam" id="3.90.110.10:FF:000002">
    <property type="entry name" value="Malate dehydrogenase"/>
    <property type="match status" value="1"/>
</dbReference>
<dbReference type="Gene3D" id="3.90.110.10">
    <property type="entry name" value="Lactate dehydrogenase/glycoside hydrolase, family 4, C-terminal"/>
    <property type="match status" value="1"/>
</dbReference>
<dbReference type="Gene3D" id="3.40.50.720">
    <property type="entry name" value="NAD(P)-binding Rossmann-like Domain"/>
    <property type="match status" value="1"/>
</dbReference>
<dbReference type="HAMAP" id="MF_01517">
    <property type="entry name" value="Malate_dehydrog_2"/>
    <property type="match status" value="1"/>
</dbReference>
<dbReference type="InterPro" id="IPR001557">
    <property type="entry name" value="L-lactate/malate_DH"/>
</dbReference>
<dbReference type="InterPro" id="IPR022383">
    <property type="entry name" value="Lactate/malate_DH_C"/>
</dbReference>
<dbReference type="InterPro" id="IPR001236">
    <property type="entry name" value="Lactate/malate_DH_N"/>
</dbReference>
<dbReference type="InterPro" id="IPR015955">
    <property type="entry name" value="Lactate_DH/Glyco_Ohase_4_C"/>
</dbReference>
<dbReference type="InterPro" id="IPR010945">
    <property type="entry name" value="Malate_DH_type2"/>
</dbReference>
<dbReference type="InterPro" id="IPR036291">
    <property type="entry name" value="NAD(P)-bd_dom_sf"/>
</dbReference>
<dbReference type="NCBIfam" id="TIGR01759">
    <property type="entry name" value="MalateDH-SF1"/>
    <property type="match status" value="1"/>
</dbReference>
<dbReference type="NCBIfam" id="NF003916">
    <property type="entry name" value="PRK05442.1"/>
    <property type="match status" value="1"/>
</dbReference>
<dbReference type="PANTHER" id="PTHR23382">
    <property type="entry name" value="MALATE DEHYDROGENASE"/>
    <property type="match status" value="1"/>
</dbReference>
<dbReference type="Pfam" id="PF02866">
    <property type="entry name" value="Ldh_1_C"/>
    <property type="match status" value="1"/>
</dbReference>
<dbReference type="Pfam" id="PF00056">
    <property type="entry name" value="Ldh_1_N"/>
    <property type="match status" value="1"/>
</dbReference>
<dbReference type="PIRSF" id="PIRSF000102">
    <property type="entry name" value="Lac_mal_DH"/>
    <property type="match status" value="1"/>
</dbReference>
<dbReference type="SUPFAM" id="SSF56327">
    <property type="entry name" value="LDH C-terminal domain-like"/>
    <property type="match status" value="1"/>
</dbReference>
<dbReference type="SUPFAM" id="SSF51735">
    <property type="entry name" value="NAD(P)-binding Rossmann-fold domains"/>
    <property type="match status" value="1"/>
</dbReference>
<evidence type="ECO:0000255" key="1">
    <source>
        <dbReference type="HAMAP-Rule" id="MF_01517"/>
    </source>
</evidence>
<sequence length="328" mass="35144">MSKKPVRVAVTGAAGQIGYALLFRIASGEMLGKDQPVILQLLEIPDEKAQKALKGVMMELDDCAFPLLAGMEAHGDPMTAFKDADYALLVGSRPRGPGMERAELLAVNGAIFTAQGKALNAVASRNVKVLVVGNPANTNAYIAMKSAPDLPRKNFTAMLRLDHNRAASQIAAKTGKAVADIEKLVVWGNHSPTMYADYRFATIKGESVAKMINDQEWNANTFLPTVGKRGAAIIEARGLSSAASAANAAIDHMRDWALGTNGKWVTMGIPSDGQYGIPKDTMFGFPVTCENGEYKLVEGLEIDAFSQERINKTLEELQGEQAGVAHLI</sequence>
<gene>
    <name evidence="1" type="primary">mdh</name>
    <name type="ordered locus">Vapar_1432</name>
</gene>
<comment type="function">
    <text evidence="1">Catalyzes the reversible oxidation of malate to oxaloacetate.</text>
</comment>
<comment type="catalytic activity">
    <reaction evidence="1">
        <text>(S)-malate + NAD(+) = oxaloacetate + NADH + H(+)</text>
        <dbReference type="Rhea" id="RHEA:21432"/>
        <dbReference type="ChEBI" id="CHEBI:15378"/>
        <dbReference type="ChEBI" id="CHEBI:15589"/>
        <dbReference type="ChEBI" id="CHEBI:16452"/>
        <dbReference type="ChEBI" id="CHEBI:57540"/>
        <dbReference type="ChEBI" id="CHEBI:57945"/>
        <dbReference type="EC" id="1.1.1.37"/>
    </reaction>
</comment>
<comment type="similarity">
    <text evidence="1">Belongs to the LDH/MDH superfamily. MDH type 2 family.</text>
</comment>
<protein>
    <recommendedName>
        <fullName evidence="1">Malate dehydrogenase</fullName>
        <ecNumber evidence="1">1.1.1.37</ecNumber>
    </recommendedName>
</protein>
<organism>
    <name type="scientific">Variovorax paradoxus (strain S110)</name>
    <dbReference type="NCBI Taxonomy" id="543728"/>
    <lineage>
        <taxon>Bacteria</taxon>
        <taxon>Pseudomonadati</taxon>
        <taxon>Pseudomonadota</taxon>
        <taxon>Betaproteobacteria</taxon>
        <taxon>Burkholderiales</taxon>
        <taxon>Comamonadaceae</taxon>
        <taxon>Variovorax</taxon>
    </lineage>
</organism>
<reference key="1">
    <citation type="journal article" date="2011" name="J. Bacteriol.">
        <title>Complete genome sequence of the metabolically versatile plant growth-promoting endophyte, Variovorax paradoxus S110.</title>
        <authorList>
            <person name="Han J.I."/>
            <person name="Choi H.K."/>
            <person name="Lee S.W."/>
            <person name="Orwin P.M."/>
            <person name="Kim J."/>
            <person name="Laroe S.L."/>
            <person name="Kim T.G."/>
            <person name="O'Neil J."/>
            <person name="Leadbetter J.R."/>
            <person name="Lee S.Y."/>
            <person name="Hur C.G."/>
            <person name="Spain J.C."/>
            <person name="Ovchinnikova G."/>
            <person name="Goodwin L."/>
            <person name="Han C."/>
        </authorList>
    </citation>
    <scope>NUCLEOTIDE SEQUENCE [LARGE SCALE GENOMIC DNA]</scope>
    <source>
        <strain>S110</strain>
    </source>
</reference>